<dbReference type="EMBL" id="Y07894">
    <property type="protein sequence ID" value="CAA69202.1"/>
    <property type="molecule type" value="mRNA"/>
</dbReference>
<dbReference type="EMBL" id="AE013599">
    <property type="protein sequence ID" value="AAF46903.1"/>
    <property type="molecule type" value="Genomic_DNA"/>
</dbReference>
<dbReference type="EMBL" id="BT003592">
    <property type="protein sequence ID" value="AAO39595.1"/>
    <property type="molecule type" value="mRNA"/>
</dbReference>
<dbReference type="RefSeq" id="NP_726243.1">
    <property type="nucleotide sequence ID" value="NM_166554.3"/>
</dbReference>
<dbReference type="SMR" id="P35381"/>
<dbReference type="BioGRID" id="63229">
    <property type="interactions" value="57"/>
</dbReference>
<dbReference type="ComplexPortal" id="CPX-8618">
    <property type="entry name" value="Mitochondrial proton-transporting ATP synthase complex"/>
</dbReference>
<dbReference type="ComplexPortal" id="CPX-8619">
    <property type="entry name" value="Mitochondrial proton-transporting ATP synthase complex, testis-specific variant"/>
</dbReference>
<dbReference type="DIP" id="DIP-19192N"/>
<dbReference type="FunCoup" id="P35381">
    <property type="interactions" value="1222"/>
</dbReference>
<dbReference type="IntAct" id="P35381">
    <property type="interactions" value="18"/>
</dbReference>
<dbReference type="MINT" id="P35381"/>
<dbReference type="STRING" id="7227.FBpp0071794"/>
<dbReference type="PaxDb" id="7227-FBpp0071794"/>
<dbReference type="DNASU" id="37617"/>
<dbReference type="EnsemblMetazoa" id="FBtr0071883">
    <property type="protein sequence ID" value="FBpp0071794"/>
    <property type="gene ID" value="FBgn0011211"/>
</dbReference>
<dbReference type="GeneID" id="37617"/>
<dbReference type="KEGG" id="dme:Dmel_CG3612"/>
<dbReference type="AGR" id="FB:FBgn0011211"/>
<dbReference type="CTD" id="37617"/>
<dbReference type="FlyBase" id="FBgn0011211">
    <property type="gene designation" value="blw"/>
</dbReference>
<dbReference type="VEuPathDB" id="VectorBase:FBgn0011211"/>
<dbReference type="eggNOG" id="KOG1353">
    <property type="taxonomic scope" value="Eukaryota"/>
</dbReference>
<dbReference type="GeneTree" id="ENSGT00550000074846"/>
<dbReference type="HOGENOM" id="CLU_010091_2_1_1"/>
<dbReference type="InParanoid" id="P35381"/>
<dbReference type="OMA" id="INQRDNW"/>
<dbReference type="OrthoDB" id="9805536at2759"/>
<dbReference type="PhylomeDB" id="P35381"/>
<dbReference type="Reactome" id="R-DME-163210">
    <property type="pathway name" value="Formation of ATP by chemiosmotic coupling"/>
</dbReference>
<dbReference type="Reactome" id="R-DME-8949613">
    <property type="pathway name" value="Cristae formation"/>
</dbReference>
<dbReference type="Reactome" id="R-DME-9837999">
    <property type="pathway name" value="Mitochondrial protein degradation"/>
</dbReference>
<dbReference type="SignaLink" id="P35381"/>
<dbReference type="BioGRID-ORCS" id="37617">
    <property type="hits" value="1 hit in 1 CRISPR screen"/>
</dbReference>
<dbReference type="ChiTaRS" id="blw">
    <property type="organism name" value="fly"/>
</dbReference>
<dbReference type="GenomeRNAi" id="37617"/>
<dbReference type="PRO" id="PR:P35381"/>
<dbReference type="Proteomes" id="UP000000803">
    <property type="component" value="Chromosome 2R"/>
</dbReference>
<dbReference type="Bgee" id="FBgn0011211">
    <property type="expression patterns" value="Expressed in adult Malpighian tubule (Drosophila) and 287 other cell types or tissues"/>
</dbReference>
<dbReference type="GO" id="GO:0005743">
    <property type="term" value="C:mitochondrial inner membrane"/>
    <property type="evidence" value="ECO:0000250"/>
    <property type="project" value="FlyBase"/>
</dbReference>
<dbReference type="GO" id="GO:0005739">
    <property type="term" value="C:mitochondrion"/>
    <property type="evidence" value="ECO:0000314"/>
    <property type="project" value="FlyBase"/>
</dbReference>
<dbReference type="GO" id="GO:0045259">
    <property type="term" value="C:proton-transporting ATP synthase complex"/>
    <property type="evidence" value="ECO:0000250"/>
    <property type="project" value="FlyBase"/>
</dbReference>
<dbReference type="GO" id="GO:0043531">
    <property type="term" value="F:ADP binding"/>
    <property type="evidence" value="ECO:0000318"/>
    <property type="project" value="GO_Central"/>
</dbReference>
<dbReference type="GO" id="GO:0005524">
    <property type="term" value="F:ATP binding"/>
    <property type="evidence" value="ECO:0000318"/>
    <property type="project" value="GO_Central"/>
</dbReference>
<dbReference type="GO" id="GO:0046933">
    <property type="term" value="F:proton-transporting ATP synthase activity, rotational mechanism"/>
    <property type="evidence" value="ECO:0007669"/>
    <property type="project" value="InterPro"/>
</dbReference>
<dbReference type="GO" id="GO:0022900">
    <property type="term" value="P:electron transport chain"/>
    <property type="evidence" value="ECO:0000314"/>
    <property type="project" value="FlyBase"/>
</dbReference>
<dbReference type="GO" id="GO:0019915">
    <property type="term" value="P:lipid storage"/>
    <property type="evidence" value="ECO:0000315"/>
    <property type="project" value="FlyBase"/>
</dbReference>
<dbReference type="GO" id="GO:0015986">
    <property type="term" value="P:proton motive force-driven ATP synthesis"/>
    <property type="evidence" value="ECO:0000250"/>
    <property type="project" value="FlyBase"/>
</dbReference>
<dbReference type="CDD" id="cd18113">
    <property type="entry name" value="ATP-synt_F1_alpha_C"/>
    <property type="match status" value="1"/>
</dbReference>
<dbReference type="CDD" id="cd18116">
    <property type="entry name" value="ATP-synt_F1_alpha_N"/>
    <property type="match status" value="1"/>
</dbReference>
<dbReference type="CDD" id="cd01132">
    <property type="entry name" value="F1-ATPase_alpha_CD"/>
    <property type="match status" value="1"/>
</dbReference>
<dbReference type="FunFam" id="1.20.150.20:FF:000001">
    <property type="entry name" value="ATP synthase subunit alpha"/>
    <property type="match status" value="1"/>
</dbReference>
<dbReference type="FunFam" id="2.40.30.20:FF:000001">
    <property type="entry name" value="ATP synthase subunit alpha"/>
    <property type="match status" value="1"/>
</dbReference>
<dbReference type="FunFam" id="3.40.50.300:FF:002432">
    <property type="entry name" value="ATP synthase subunit alpha, mitochondrial"/>
    <property type="match status" value="1"/>
</dbReference>
<dbReference type="Gene3D" id="2.40.30.20">
    <property type="match status" value="1"/>
</dbReference>
<dbReference type="Gene3D" id="1.20.150.20">
    <property type="entry name" value="ATP synthase alpha/beta chain, C-terminal domain"/>
    <property type="match status" value="1"/>
</dbReference>
<dbReference type="Gene3D" id="3.40.50.300">
    <property type="entry name" value="P-loop containing nucleotide triphosphate hydrolases"/>
    <property type="match status" value="1"/>
</dbReference>
<dbReference type="HAMAP" id="MF_01346">
    <property type="entry name" value="ATP_synth_alpha_bact"/>
    <property type="match status" value="1"/>
</dbReference>
<dbReference type="InterPro" id="IPR023366">
    <property type="entry name" value="ATP_synth_asu-like_sf"/>
</dbReference>
<dbReference type="InterPro" id="IPR000793">
    <property type="entry name" value="ATP_synth_asu_C"/>
</dbReference>
<dbReference type="InterPro" id="IPR038376">
    <property type="entry name" value="ATP_synth_asu_C_sf"/>
</dbReference>
<dbReference type="InterPro" id="IPR033732">
    <property type="entry name" value="ATP_synth_F1_a_nt-bd_dom"/>
</dbReference>
<dbReference type="InterPro" id="IPR005294">
    <property type="entry name" value="ATP_synth_F1_asu"/>
</dbReference>
<dbReference type="InterPro" id="IPR020003">
    <property type="entry name" value="ATPase_a/bsu_AS"/>
</dbReference>
<dbReference type="InterPro" id="IPR004100">
    <property type="entry name" value="ATPase_F1/V1/A1_a/bsu_N"/>
</dbReference>
<dbReference type="InterPro" id="IPR036121">
    <property type="entry name" value="ATPase_F1/V1/A1_a/bsu_N_sf"/>
</dbReference>
<dbReference type="InterPro" id="IPR000194">
    <property type="entry name" value="ATPase_F1/V1/A1_a/bsu_nucl-bd"/>
</dbReference>
<dbReference type="InterPro" id="IPR027417">
    <property type="entry name" value="P-loop_NTPase"/>
</dbReference>
<dbReference type="NCBIfam" id="TIGR00962">
    <property type="entry name" value="atpA"/>
    <property type="match status" value="1"/>
</dbReference>
<dbReference type="NCBIfam" id="NF009884">
    <property type="entry name" value="PRK13343.1"/>
    <property type="match status" value="1"/>
</dbReference>
<dbReference type="PANTHER" id="PTHR48082">
    <property type="entry name" value="ATP SYNTHASE SUBUNIT ALPHA, MITOCHONDRIAL"/>
    <property type="match status" value="1"/>
</dbReference>
<dbReference type="PANTHER" id="PTHR48082:SF2">
    <property type="entry name" value="ATP SYNTHASE SUBUNIT ALPHA, MITOCHONDRIAL"/>
    <property type="match status" value="1"/>
</dbReference>
<dbReference type="Pfam" id="PF00006">
    <property type="entry name" value="ATP-synt_ab"/>
    <property type="match status" value="1"/>
</dbReference>
<dbReference type="Pfam" id="PF00306">
    <property type="entry name" value="ATP-synt_ab_C"/>
    <property type="match status" value="1"/>
</dbReference>
<dbReference type="Pfam" id="PF02874">
    <property type="entry name" value="ATP-synt_ab_N"/>
    <property type="match status" value="1"/>
</dbReference>
<dbReference type="PIRSF" id="PIRSF039088">
    <property type="entry name" value="F_ATPase_subunit_alpha"/>
    <property type="match status" value="1"/>
</dbReference>
<dbReference type="SUPFAM" id="SSF47917">
    <property type="entry name" value="C-terminal domain of alpha and beta subunits of F1 ATP synthase"/>
    <property type="match status" value="1"/>
</dbReference>
<dbReference type="SUPFAM" id="SSF50615">
    <property type="entry name" value="N-terminal domain of alpha and beta subunits of F1 ATP synthase"/>
    <property type="match status" value="1"/>
</dbReference>
<dbReference type="SUPFAM" id="SSF52540">
    <property type="entry name" value="P-loop containing nucleoside triphosphate hydrolases"/>
    <property type="match status" value="1"/>
</dbReference>
<dbReference type="PROSITE" id="PS00152">
    <property type="entry name" value="ATPASE_ALPHA_BETA"/>
    <property type="match status" value="1"/>
</dbReference>
<proteinExistence type="evidence at protein level"/>
<sequence length="552" mass="59422">MSIFSARLASSVARNLPKAANQVACKAAYPAASLAARKLHVASTQRSAEISNILEERILGVAPKADLEETGRVLSIGDGIARVYGLNNIQADEMVEFSSGLKGMALNLEPDNVGVVVFGNDKLIKQGDIVKRTGAIVDVPVGDELLGRVVDALGNAIDGKGAINTKDRFRVGIKAPGIIPRVSVREPMQTGIKAVDSLVPIGRGQRELIIGDRQTGKTALAIDTIINQKRFNEAQDESKKLYCIYVAIGQKRSTVAQIVKRLTDSGAMGYSVIVSATASDAAPLQYLAPYSGCAMGEYFRDKGKHALIIYDDLSKQAVAYRQMSLLLRRPPGREAYPGDVFYLHSRLLERAAKMSPAMGGGSLTALPVIETQAGDVSAYIPTNVISITDGQIFLETELFYKGIRPAINVGLSVSRVGSAAQTKAMKQVAGSMKLELAQYREVAAFAQFGSDLDAATQQLLNRGVRLTELLKQGQYVPMAIEDQVAVIYCGVRGHLDKMDPAKITKFEKEFLQHIKTSEQALLDTIAKDGAISEASDAKLKDIVAKFMSTFQG</sequence>
<protein>
    <recommendedName>
        <fullName>ATP synthase subunit alpha, mitochondrial</fullName>
    </recommendedName>
    <alternativeName>
        <fullName>Protein bellwether</fullName>
    </alternativeName>
</protein>
<keyword id="KW-0066">ATP synthesis</keyword>
<keyword id="KW-0067">ATP-binding</keyword>
<keyword id="KW-0139">CF(1)</keyword>
<keyword id="KW-0903">Direct protein sequencing</keyword>
<keyword id="KW-0375">Hydrogen ion transport</keyword>
<keyword id="KW-0406">Ion transport</keyword>
<keyword id="KW-0472">Membrane</keyword>
<keyword id="KW-0496">Mitochondrion</keyword>
<keyword id="KW-0999">Mitochondrion inner membrane</keyword>
<keyword id="KW-0547">Nucleotide-binding</keyword>
<keyword id="KW-1185">Reference proteome</keyword>
<keyword id="KW-0809">Transit peptide</keyword>
<keyword id="KW-0813">Transport</keyword>
<organism>
    <name type="scientific">Drosophila melanogaster</name>
    <name type="common">Fruit fly</name>
    <dbReference type="NCBI Taxonomy" id="7227"/>
    <lineage>
        <taxon>Eukaryota</taxon>
        <taxon>Metazoa</taxon>
        <taxon>Ecdysozoa</taxon>
        <taxon>Arthropoda</taxon>
        <taxon>Hexapoda</taxon>
        <taxon>Insecta</taxon>
        <taxon>Pterygota</taxon>
        <taxon>Neoptera</taxon>
        <taxon>Endopterygota</taxon>
        <taxon>Diptera</taxon>
        <taxon>Brachycera</taxon>
        <taxon>Muscomorpha</taxon>
        <taxon>Ephydroidea</taxon>
        <taxon>Drosophilidae</taxon>
        <taxon>Drosophila</taxon>
        <taxon>Sophophora</taxon>
    </lineage>
</organism>
<gene>
    <name type="primary">blw</name>
    <name type="synonym">ATPSYN-ALPHA</name>
    <name type="ORF">CG3612</name>
</gene>
<evidence type="ECO:0000250" key="1"/>
<evidence type="ECO:0000255" key="2"/>
<evidence type="ECO:0000305" key="3"/>
<comment type="function">
    <text evidence="1">Mitochondrial membrane ATP synthase (F(1)F(0) ATP synthase or Complex V) produces ATP from ADP in the presence of a proton gradient across the membrane which is generated by electron transport complexes of the respiratory chain. F-type ATPases consist of two structural domains, F(1) - containing the extramembraneous catalytic core, and F(0) - containing the membrane proton channel, linked together by a central stalk and a peripheral stalk. During catalysis, ATP synthesis in the catalytic domain of F(1) is coupled via a rotary mechanism of the central stalk subunits to proton translocation. Subunits alpha and beta form the catalytic core in F(1). Rotation of the central stalk against the surrounding alpha(3)beta(3) subunits leads to hydrolysis of ATP in three separate catalytic sites on the beta subunits. Subunit alpha does not bear the catalytic high-affinity ATP-binding sites (By similarity).</text>
</comment>
<comment type="subunit">
    <text>F-type ATPases have 2 components, CF(1) - the catalytic core - and CF(0) - the membrane proton channel. CF(1) has five subunits: alpha(3), beta(3), gamma(1), delta(1), epsilon(1). CF(0) has three main subunits: a, b and c.</text>
</comment>
<comment type="subcellular location">
    <subcellularLocation>
        <location>Mitochondrion inner membrane</location>
    </subcellularLocation>
    <text>Peripheral membrane protein.</text>
</comment>
<comment type="similarity">
    <text evidence="3">Belongs to the ATPase alpha/beta chains family.</text>
</comment>
<reference key="1">
    <citation type="journal article" date="1998" name="Mol. Biol. Rep.">
        <title>Expression of the nuclear gene encoding mitochondrial ATP synthase subunit alpha in early development of Drosophila and sea urchin.</title>
        <authorList>
            <person name="Talamillo A."/>
            <person name="Chisholm A.A.K."/>
            <person name="Garesse R."/>
            <person name="Jacobs H.T."/>
        </authorList>
    </citation>
    <scope>NUCLEOTIDE SEQUENCE [MRNA]</scope>
    <source>
        <strain>Oregon-R</strain>
        <tissue>Testis</tissue>
    </source>
</reference>
<reference key="2">
    <citation type="journal article" date="2000" name="Science">
        <title>The genome sequence of Drosophila melanogaster.</title>
        <authorList>
            <person name="Adams M.D."/>
            <person name="Celniker S.E."/>
            <person name="Holt R.A."/>
            <person name="Evans C.A."/>
            <person name="Gocayne J.D."/>
            <person name="Amanatides P.G."/>
            <person name="Scherer S.E."/>
            <person name="Li P.W."/>
            <person name="Hoskins R.A."/>
            <person name="Galle R.F."/>
            <person name="George R.A."/>
            <person name="Lewis S.E."/>
            <person name="Richards S."/>
            <person name="Ashburner M."/>
            <person name="Henderson S.N."/>
            <person name="Sutton G.G."/>
            <person name="Wortman J.R."/>
            <person name="Yandell M.D."/>
            <person name="Zhang Q."/>
            <person name="Chen L.X."/>
            <person name="Brandon R.C."/>
            <person name="Rogers Y.-H.C."/>
            <person name="Blazej R.G."/>
            <person name="Champe M."/>
            <person name="Pfeiffer B.D."/>
            <person name="Wan K.H."/>
            <person name="Doyle C."/>
            <person name="Baxter E.G."/>
            <person name="Helt G."/>
            <person name="Nelson C.R."/>
            <person name="Miklos G.L.G."/>
            <person name="Abril J.F."/>
            <person name="Agbayani A."/>
            <person name="An H.-J."/>
            <person name="Andrews-Pfannkoch C."/>
            <person name="Baldwin D."/>
            <person name="Ballew R.M."/>
            <person name="Basu A."/>
            <person name="Baxendale J."/>
            <person name="Bayraktaroglu L."/>
            <person name="Beasley E.M."/>
            <person name="Beeson K.Y."/>
            <person name="Benos P.V."/>
            <person name="Berman B.P."/>
            <person name="Bhandari D."/>
            <person name="Bolshakov S."/>
            <person name="Borkova D."/>
            <person name="Botchan M.R."/>
            <person name="Bouck J."/>
            <person name="Brokstein P."/>
            <person name="Brottier P."/>
            <person name="Burtis K.C."/>
            <person name="Busam D.A."/>
            <person name="Butler H."/>
            <person name="Cadieu E."/>
            <person name="Center A."/>
            <person name="Chandra I."/>
            <person name="Cherry J.M."/>
            <person name="Cawley S."/>
            <person name="Dahlke C."/>
            <person name="Davenport L.B."/>
            <person name="Davies P."/>
            <person name="de Pablos B."/>
            <person name="Delcher A."/>
            <person name="Deng Z."/>
            <person name="Mays A.D."/>
            <person name="Dew I."/>
            <person name="Dietz S.M."/>
            <person name="Dodson K."/>
            <person name="Doup L.E."/>
            <person name="Downes M."/>
            <person name="Dugan-Rocha S."/>
            <person name="Dunkov B.C."/>
            <person name="Dunn P."/>
            <person name="Durbin K.J."/>
            <person name="Evangelista C.C."/>
            <person name="Ferraz C."/>
            <person name="Ferriera S."/>
            <person name="Fleischmann W."/>
            <person name="Fosler C."/>
            <person name="Gabrielian A.E."/>
            <person name="Garg N.S."/>
            <person name="Gelbart W.M."/>
            <person name="Glasser K."/>
            <person name="Glodek A."/>
            <person name="Gong F."/>
            <person name="Gorrell J.H."/>
            <person name="Gu Z."/>
            <person name="Guan P."/>
            <person name="Harris M."/>
            <person name="Harris N.L."/>
            <person name="Harvey D.A."/>
            <person name="Heiman T.J."/>
            <person name="Hernandez J.R."/>
            <person name="Houck J."/>
            <person name="Hostin D."/>
            <person name="Houston K.A."/>
            <person name="Howland T.J."/>
            <person name="Wei M.-H."/>
            <person name="Ibegwam C."/>
            <person name="Jalali M."/>
            <person name="Kalush F."/>
            <person name="Karpen G.H."/>
            <person name="Ke Z."/>
            <person name="Kennison J.A."/>
            <person name="Ketchum K.A."/>
            <person name="Kimmel B.E."/>
            <person name="Kodira C.D."/>
            <person name="Kraft C.L."/>
            <person name="Kravitz S."/>
            <person name="Kulp D."/>
            <person name="Lai Z."/>
            <person name="Lasko P."/>
            <person name="Lei Y."/>
            <person name="Levitsky A.A."/>
            <person name="Li J.H."/>
            <person name="Li Z."/>
            <person name="Liang Y."/>
            <person name="Lin X."/>
            <person name="Liu X."/>
            <person name="Mattei B."/>
            <person name="McIntosh T.C."/>
            <person name="McLeod M.P."/>
            <person name="McPherson D."/>
            <person name="Merkulov G."/>
            <person name="Milshina N.V."/>
            <person name="Mobarry C."/>
            <person name="Morris J."/>
            <person name="Moshrefi A."/>
            <person name="Mount S.M."/>
            <person name="Moy M."/>
            <person name="Murphy B."/>
            <person name="Murphy L."/>
            <person name="Muzny D.M."/>
            <person name="Nelson D.L."/>
            <person name="Nelson D.R."/>
            <person name="Nelson K.A."/>
            <person name="Nixon K."/>
            <person name="Nusskern D.R."/>
            <person name="Pacleb J.M."/>
            <person name="Palazzolo M."/>
            <person name="Pittman G.S."/>
            <person name="Pan S."/>
            <person name="Pollard J."/>
            <person name="Puri V."/>
            <person name="Reese M.G."/>
            <person name="Reinert K."/>
            <person name="Remington K."/>
            <person name="Saunders R.D.C."/>
            <person name="Scheeler F."/>
            <person name="Shen H."/>
            <person name="Shue B.C."/>
            <person name="Siden-Kiamos I."/>
            <person name="Simpson M."/>
            <person name="Skupski M.P."/>
            <person name="Smith T.J."/>
            <person name="Spier E."/>
            <person name="Spradling A.C."/>
            <person name="Stapleton M."/>
            <person name="Strong R."/>
            <person name="Sun E."/>
            <person name="Svirskas R."/>
            <person name="Tector C."/>
            <person name="Turner R."/>
            <person name="Venter E."/>
            <person name="Wang A.H."/>
            <person name="Wang X."/>
            <person name="Wang Z.-Y."/>
            <person name="Wassarman D.A."/>
            <person name="Weinstock G.M."/>
            <person name="Weissenbach J."/>
            <person name="Williams S.M."/>
            <person name="Woodage T."/>
            <person name="Worley K.C."/>
            <person name="Wu D."/>
            <person name="Yang S."/>
            <person name="Yao Q.A."/>
            <person name="Ye J."/>
            <person name="Yeh R.-F."/>
            <person name="Zaveri J.S."/>
            <person name="Zhan M."/>
            <person name="Zhang G."/>
            <person name="Zhao Q."/>
            <person name="Zheng L."/>
            <person name="Zheng X.H."/>
            <person name="Zhong F.N."/>
            <person name="Zhong W."/>
            <person name="Zhou X."/>
            <person name="Zhu S.C."/>
            <person name="Zhu X."/>
            <person name="Smith H.O."/>
            <person name="Gibbs R.A."/>
            <person name="Myers E.W."/>
            <person name="Rubin G.M."/>
            <person name="Venter J.C."/>
        </authorList>
    </citation>
    <scope>NUCLEOTIDE SEQUENCE [LARGE SCALE GENOMIC DNA]</scope>
    <source>
        <strain>Berkeley</strain>
    </source>
</reference>
<reference key="3">
    <citation type="journal article" date="2002" name="Genome Biol.">
        <title>Annotation of the Drosophila melanogaster euchromatic genome: a systematic review.</title>
        <authorList>
            <person name="Misra S."/>
            <person name="Crosby M.A."/>
            <person name="Mungall C.J."/>
            <person name="Matthews B.B."/>
            <person name="Campbell K.S."/>
            <person name="Hradecky P."/>
            <person name="Huang Y."/>
            <person name="Kaminker J.S."/>
            <person name="Millburn G.H."/>
            <person name="Prochnik S.E."/>
            <person name="Smith C.D."/>
            <person name="Tupy J.L."/>
            <person name="Whitfield E.J."/>
            <person name="Bayraktaroglu L."/>
            <person name="Berman B.P."/>
            <person name="Bettencourt B.R."/>
            <person name="Celniker S.E."/>
            <person name="de Grey A.D.N.J."/>
            <person name="Drysdale R.A."/>
            <person name="Harris N.L."/>
            <person name="Richter J."/>
            <person name="Russo S."/>
            <person name="Schroeder A.J."/>
            <person name="Shu S.Q."/>
            <person name="Stapleton M."/>
            <person name="Yamada C."/>
            <person name="Ashburner M."/>
            <person name="Gelbart W.M."/>
            <person name="Rubin G.M."/>
            <person name="Lewis S.E."/>
        </authorList>
    </citation>
    <scope>GENOME REANNOTATION</scope>
    <source>
        <strain>Berkeley</strain>
    </source>
</reference>
<reference key="4">
    <citation type="submission" date="2003-02" db="EMBL/GenBank/DDBJ databases">
        <authorList>
            <person name="Stapleton M."/>
            <person name="Brokstein P."/>
            <person name="Hong L."/>
            <person name="Agbayani A."/>
            <person name="Carlson J.W."/>
            <person name="Champe M."/>
            <person name="Chavez C."/>
            <person name="Dorsett V."/>
            <person name="Dresnek D."/>
            <person name="Farfan D."/>
            <person name="Frise E."/>
            <person name="George R.A."/>
            <person name="Gonzalez M."/>
            <person name="Guarin H."/>
            <person name="Kronmiller B."/>
            <person name="Li P.W."/>
            <person name="Liao G."/>
            <person name="Miranda A."/>
            <person name="Mungall C.J."/>
            <person name="Nunoo J."/>
            <person name="Pacleb J.M."/>
            <person name="Paragas V."/>
            <person name="Park S."/>
            <person name="Patel S."/>
            <person name="Phouanenavong S."/>
            <person name="Wan K.H."/>
            <person name="Yu C."/>
            <person name="Lewis S.E."/>
            <person name="Rubin G.M."/>
            <person name="Celniker S.E."/>
        </authorList>
    </citation>
    <scope>NUCLEOTIDE SEQUENCE [LARGE SCALE MRNA]</scope>
    <source>
        <strain>Berkeley</strain>
        <tissue>Head</tissue>
    </source>
</reference>
<reference key="5">
    <citation type="journal article" date="1993" name="Exp. Cell Res.">
        <title>Identification of Drosophila wing imaginal disc proteins by two-dimensional gel analysis and microsequencing.</title>
        <authorList>
            <person name="Santaren J.F."/>
            <person name="van Damme J."/>
            <person name="Puype M."/>
            <person name="Vandekerckhove J."/>
            <person name="Garcia-Bellido A."/>
        </authorList>
    </citation>
    <scope>PROTEIN SEQUENCE OF 472-491</scope>
    <source>
        <strain>Vallecas</strain>
        <tissue>Wing imaginal disk</tissue>
    </source>
</reference>
<accession>P35381</accession>
<accession>Q53YF5</accession>
<accession>Q94512</accession>
<accession>Q9W1Z7</accession>
<feature type="transit peptide" description="Mitochondrion" evidence="2">
    <location>
        <begin position="1"/>
        <end position="47"/>
    </location>
</feature>
<feature type="chain" id="PRO_0000002429" description="ATP synthase subunit alpha, mitochondrial">
    <location>
        <begin position="48"/>
        <end position="552"/>
    </location>
</feature>
<feature type="binding site" evidence="2">
    <location>
        <begin position="211"/>
        <end position="218"/>
    </location>
    <ligand>
        <name>ATP</name>
        <dbReference type="ChEBI" id="CHEBI:30616"/>
    </ligand>
</feature>
<feature type="site" description="Required for activity" evidence="1">
    <location>
        <position position="412"/>
    </location>
</feature>
<name>ATPA_DROME</name>